<dbReference type="EMBL" id="CP000255">
    <property type="protein sequence ID" value="ABD21084.1"/>
    <property type="molecule type" value="Genomic_DNA"/>
</dbReference>
<dbReference type="RefSeq" id="WP_000623881.1">
    <property type="nucleotide sequence ID" value="NZ_CP027476.1"/>
</dbReference>
<dbReference type="SMR" id="Q2FEQ5"/>
<dbReference type="KEGG" id="saa:SAUSA300_2188"/>
<dbReference type="HOGENOM" id="CLU_098841_0_1_9"/>
<dbReference type="OMA" id="NKQIYAQ"/>
<dbReference type="Proteomes" id="UP000001939">
    <property type="component" value="Chromosome"/>
</dbReference>
<dbReference type="GO" id="GO:0022625">
    <property type="term" value="C:cytosolic large ribosomal subunit"/>
    <property type="evidence" value="ECO:0007669"/>
    <property type="project" value="TreeGrafter"/>
</dbReference>
<dbReference type="GO" id="GO:0008097">
    <property type="term" value="F:5S rRNA binding"/>
    <property type="evidence" value="ECO:0007669"/>
    <property type="project" value="TreeGrafter"/>
</dbReference>
<dbReference type="GO" id="GO:0003735">
    <property type="term" value="F:structural constituent of ribosome"/>
    <property type="evidence" value="ECO:0007669"/>
    <property type="project" value="InterPro"/>
</dbReference>
<dbReference type="GO" id="GO:0006412">
    <property type="term" value="P:translation"/>
    <property type="evidence" value="ECO:0007669"/>
    <property type="project" value="UniProtKB-UniRule"/>
</dbReference>
<dbReference type="CDD" id="cd00432">
    <property type="entry name" value="Ribosomal_L18_L5e"/>
    <property type="match status" value="1"/>
</dbReference>
<dbReference type="FunFam" id="3.30.420.100:FF:000001">
    <property type="entry name" value="50S ribosomal protein L18"/>
    <property type="match status" value="1"/>
</dbReference>
<dbReference type="Gene3D" id="3.30.420.100">
    <property type="match status" value="1"/>
</dbReference>
<dbReference type="HAMAP" id="MF_01337_B">
    <property type="entry name" value="Ribosomal_uL18_B"/>
    <property type="match status" value="1"/>
</dbReference>
<dbReference type="InterPro" id="IPR004389">
    <property type="entry name" value="Ribosomal_uL18_bac-type"/>
</dbReference>
<dbReference type="InterPro" id="IPR005484">
    <property type="entry name" value="Ribosomal_uL18_bac/euk"/>
</dbReference>
<dbReference type="NCBIfam" id="TIGR00060">
    <property type="entry name" value="L18_bact"/>
    <property type="match status" value="1"/>
</dbReference>
<dbReference type="PANTHER" id="PTHR12899">
    <property type="entry name" value="39S RIBOSOMAL PROTEIN L18, MITOCHONDRIAL"/>
    <property type="match status" value="1"/>
</dbReference>
<dbReference type="PANTHER" id="PTHR12899:SF3">
    <property type="entry name" value="LARGE RIBOSOMAL SUBUNIT PROTEIN UL18M"/>
    <property type="match status" value="1"/>
</dbReference>
<dbReference type="Pfam" id="PF00861">
    <property type="entry name" value="Ribosomal_L18p"/>
    <property type="match status" value="1"/>
</dbReference>
<dbReference type="SUPFAM" id="SSF53137">
    <property type="entry name" value="Translational machinery components"/>
    <property type="match status" value="1"/>
</dbReference>
<feature type="chain" id="PRO_0000251375" description="Large ribosomal subunit protein uL18">
    <location>
        <begin position="1"/>
        <end position="119"/>
    </location>
</feature>
<gene>
    <name evidence="1" type="primary">rplR</name>
    <name type="ordered locus">SAUSA300_2188</name>
</gene>
<proteinExistence type="inferred from homology"/>
<protein>
    <recommendedName>
        <fullName evidence="1">Large ribosomal subunit protein uL18</fullName>
    </recommendedName>
    <alternativeName>
        <fullName evidence="2">50S ribosomal protein L18</fullName>
    </alternativeName>
</protein>
<reference key="1">
    <citation type="journal article" date="2006" name="Lancet">
        <title>Complete genome sequence of USA300, an epidemic clone of community-acquired meticillin-resistant Staphylococcus aureus.</title>
        <authorList>
            <person name="Diep B.A."/>
            <person name="Gill S.R."/>
            <person name="Chang R.F."/>
            <person name="Phan T.H."/>
            <person name="Chen J.H."/>
            <person name="Davidson M.G."/>
            <person name="Lin F."/>
            <person name="Lin J."/>
            <person name="Carleton H.A."/>
            <person name="Mongodin E.F."/>
            <person name="Sensabaugh G.F."/>
            <person name="Perdreau-Remington F."/>
        </authorList>
    </citation>
    <scope>NUCLEOTIDE SEQUENCE [LARGE SCALE GENOMIC DNA]</scope>
    <source>
        <strain>USA300</strain>
    </source>
</reference>
<organism>
    <name type="scientific">Staphylococcus aureus (strain USA300)</name>
    <dbReference type="NCBI Taxonomy" id="367830"/>
    <lineage>
        <taxon>Bacteria</taxon>
        <taxon>Bacillati</taxon>
        <taxon>Bacillota</taxon>
        <taxon>Bacilli</taxon>
        <taxon>Bacillales</taxon>
        <taxon>Staphylococcaceae</taxon>
        <taxon>Staphylococcus</taxon>
    </lineage>
</organism>
<evidence type="ECO:0000255" key="1">
    <source>
        <dbReference type="HAMAP-Rule" id="MF_01337"/>
    </source>
</evidence>
<evidence type="ECO:0000305" key="2"/>
<keyword id="KW-0687">Ribonucleoprotein</keyword>
<keyword id="KW-0689">Ribosomal protein</keyword>
<keyword id="KW-0694">RNA-binding</keyword>
<keyword id="KW-0699">rRNA-binding</keyword>
<comment type="function">
    <text evidence="1">This is one of the proteins that bind and probably mediate the attachment of the 5S RNA into the large ribosomal subunit, where it forms part of the central protuberance.</text>
</comment>
<comment type="subunit">
    <text evidence="1">Part of the 50S ribosomal subunit; part of the 5S rRNA/L5/L18/L25 subcomplex. Contacts the 5S and 23S rRNAs.</text>
</comment>
<comment type="similarity">
    <text evidence="1">Belongs to the universal ribosomal protein uL18 family.</text>
</comment>
<sequence length="119" mass="13097">MISKIDKNKVRLKRHARVRTNLSGTAEKPRLNVYRSNKHIYAQIIDDNKGVTLAQASSKDSDIATTATKVELATKVGEAIAKKAADKGIKEIVFDRGGYLYHGRVKALAEAARESGLEF</sequence>
<accession>Q2FEQ5</accession>
<name>RL18_STAA3</name>